<keyword id="KW-0150">Chloroplast</keyword>
<keyword id="KW-0934">Plastid</keyword>
<keyword id="KW-1185">Reference proteome</keyword>
<keyword id="KW-0687">Ribonucleoprotein</keyword>
<keyword id="KW-0689">Ribosomal protein</keyword>
<keyword id="KW-0694">RNA-binding</keyword>
<keyword id="KW-0699">rRNA-binding</keyword>
<feature type="chain" id="PRO_0000272920" description="Large ribosomal subunit protein uL23c">
    <location>
        <begin position="1"/>
        <end position="91"/>
    </location>
</feature>
<geneLocation type="chloroplast"/>
<proteinExistence type="inferred from homology"/>
<dbReference type="EMBL" id="AP005672">
    <property type="protein sequence ID" value="BAC85084.1"/>
    <property type="molecule type" value="Genomic_DNA"/>
</dbReference>
<dbReference type="RefSeq" id="NP_904234.1">
    <property type="nucleotide sequence ID" value="NC_005087.2"/>
</dbReference>
<dbReference type="RefSeq" id="YP_009477564.1">
    <property type="nucleotide sequence ID" value="NC_037465.1"/>
</dbReference>
<dbReference type="SMR" id="Q6YXK5"/>
<dbReference type="FunCoup" id="Q6YXK5">
    <property type="interactions" value="135"/>
</dbReference>
<dbReference type="STRING" id="3218.Q6YXK5"/>
<dbReference type="GeneID" id="2546777"/>
<dbReference type="GeneID" id="36487197"/>
<dbReference type="KEGG" id="ppp:2546777"/>
<dbReference type="InParanoid" id="Q6YXK5"/>
<dbReference type="OrthoDB" id="563989at2759"/>
<dbReference type="Proteomes" id="UP000006727">
    <property type="component" value="Chloroplast"/>
</dbReference>
<dbReference type="GO" id="GO:0009507">
    <property type="term" value="C:chloroplast"/>
    <property type="evidence" value="ECO:0007669"/>
    <property type="project" value="UniProtKB-SubCell"/>
</dbReference>
<dbReference type="GO" id="GO:0022625">
    <property type="term" value="C:cytosolic large ribosomal subunit"/>
    <property type="evidence" value="ECO:0000318"/>
    <property type="project" value="GO_Central"/>
</dbReference>
<dbReference type="GO" id="GO:0019843">
    <property type="term" value="F:rRNA binding"/>
    <property type="evidence" value="ECO:0007669"/>
    <property type="project" value="UniProtKB-UniRule"/>
</dbReference>
<dbReference type="GO" id="GO:0003735">
    <property type="term" value="F:structural constituent of ribosome"/>
    <property type="evidence" value="ECO:0000318"/>
    <property type="project" value="GO_Central"/>
</dbReference>
<dbReference type="GO" id="GO:0006412">
    <property type="term" value="P:translation"/>
    <property type="evidence" value="ECO:0007669"/>
    <property type="project" value="UniProtKB-UniRule"/>
</dbReference>
<dbReference type="FunFam" id="3.30.70.330:FF:000001">
    <property type="entry name" value="50S ribosomal protein L23"/>
    <property type="match status" value="1"/>
</dbReference>
<dbReference type="Gene3D" id="3.30.70.330">
    <property type="match status" value="1"/>
</dbReference>
<dbReference type="HAMAP" id="MF_01369_B">
    <property type="entry name" value="Ribosomal_uL23_B"/>
    <property type="match status" value="1"/>
</dbReference>
<dbReference type="InterPro" id="IPR012677">
    <property type="entry name" value="Nucleotide-bd_a/b_plait_sf"/>
</dbReference>
<dbReference type="InterPro" id="IPR013025">
    <property type="entry name" value="Ribosomal_uL23-like"/>
</dbReference>
<dbReference type="InterPro" id="IPR012678">
    <property type="entry name" value="Ribosomal_uL23/eL15/eS24_sf"/>
</dbReference>
<dbReference type="InterPro" id="IPR001014">
    <property type="entry name" value="Ribosomal_uL23_CS"/>
</dbReference>
<dbReference type="NCBIfam" id="NF004363">
    <property type="entry name" value="PRK05738.2-4"/>
    <property type="match status" value="1"/>
</dbReference>
<dbReference type="PANTHER" id="PTHR11620">
    <property type="entry name" value="60S RIBOSOMAL PROTEIN L23A"/>
    <property type="match status" value="1"/>
</dbReference>
<dbReference type="Pfam" id="PF00276">
    <property type="entry name" value="Ribosomal_L23"/>
    <property type="match status" value="1"/>
</dbReference>
<dbReference type="SUPFAM" id="SSF54189">
    <property type="entry name" value="Ribosomal proteins S24e, L23 and L15e"/>
    <property type="match status" value="1"/>
</dbReference>
<dbReference type="PROSITE" id="PS00050">
    <property type="entry name" value="RIBOSOMAL_L23"/>
    <property type="match status" value="1"/>
</dbReference>
<name>RK23_PHYPA</name>
<comment type="function">
    <text evidence="1">Binds to 23S rRNA.</text>
</comment>
<comment type="subunit">
    <text evidence="1">Part of the 50S ribosomal subunit.</text>
</comment>
<comment type="subcellular location">
    <subcellularLocation>
        <location>Plastid</location>
        <location>Chloroplast</location>
    </subcellularLocation>
</comment>
<comment type="similarity">
    <text evidence="2">Belongs to the universal ribosomal protein uL23 family.</text>
</comment>
<evidence type="ECO:0000250" key="1"/>
<evidence type="ECO:0000305" key="2"/>
<reference key="1">
    <citation type="journal article" date="2003" name="Nucleic Acids Res.">
        <title>Complete chloroplast DNA sequence of the moss Physcomitrella patens: evidence for the loss and relocation of rpoA from the chloroplast to the nucleus.</title>
        <authorList>
            <person name="Sugiura C."/>
            <person name="Kobayashi Y."/>
            <person name="Setsuyuki A."/>
            <person name="Sugita C."/>
            <person name="Sugita M."/>
        </authorList>
    </citation>
    <scope>NUCLEOTIDE SEQUENCE [LARGE SCALE GENOMIC DNA]</scope>
    <source>
        <strain>cv. Gransden 2004</strain>
    </source>
</reference>
<gene>
    <name type="primary">rpl23</name>
</gene>
<organism>
    <name type="scientific">Physcomitrium patens</name>
    <name type="common">Spreading-leaved earth moss</name>
    <name type="synonym">Physcomitrella patens</name>
    <dbReference type="NCBI Taxonomy" id="3218"/>
    <lineage>
        <taxon>Eukaryota</taxon>
        <taxon>Viridiplantae</taxon>
        <taxon>Streptophyta</taxon>
        <taxon>Embryophyta</taxon>
        <taxon>Bryophyta</taxon>
        <taxon>Bryophytina</taxon>
        <taxon>Bryopsida</taxon>
        <taxon>Funariidae</taxon>
        <taxon>Funariales</taxon>
        <taxon>Funariaceae</taxon>
        <taxon>Physcomitrium</taxon>
    </lineage>
</organism>
<accession>Q6YXK5</accession>
<sequence length="91" mass="10761">MDEIKYPVLTEKTIRLLEKNQYTFDVNKKSTKPQIKKWIENFFNVKVKAINSHIPPEKKKRIGPIIGHSVRYKRMIITLKTGYSIPLFSNK</sequence>
<protein>
    <recommendedName>
        <fullName evidence="2">Large ribosomal subunit protein uL23c</fullName>
    </recommendedName>
    <alternativeName>
        <fullName>50S ribosomal protein L23, chloroplastic</fullName>
    </alternativeName>
</protein>